<protein>
    <recommendedName>
        <fullName>Centromere protein C</fullName>
        <shortName>CENP-C</shortName>
    </recommendedName>
    <alternativeName>
        <fullName>Centromere autoantigen C</fullName>
    </alternativeName>
    <alternativeName>
        <fullName>Centromere protein C 1</fullName>
        <shortName>CENP-C 1</shortName>
    </alternativeName>
</protein>
<feature type="chain" id="PRO_0000089475" description="Centromere protein C">
    <location>
        <begin position="1"/>
        <end position="906"/>
    </location>
</feature>
<feature type="region of interest" description="Disordered" evidence="4">
    <location>
        <begin position="56"/>
        <end position="115"/>
    </location>
</feature>
<feature type="region of interest" description="Disordered" evidence="4">
    <location>
        <begin position="141"/>
        <end position="169"/>
    </location>
</feature>
<feature type="region of interest" description="Disordered" evidence="4">
    <location>
        <begin position="197"/>
        <end position="224"/>
    </location>
</feature>
<feature type="region of interest" description="Disordered" evidence="4">
    <location>
        <begin position="294"/>
        <end position="320"/>
    </location>
</feature>
<feature type="region of interest" description="Disordered" evidence="4">
    <location>
        <begin position="341"/>
        <end position="596"/>
    </location>
</feature>
<feature type="region of interest" description="Disordered" evidence="4">
    <location>
        <begin position="623"/>
        <end position="671"/>
    </location>
</feature>
<feature type="region of interest" description="MIF2 homology domain II" evidence="1">
    <location>
        <begin position="702"/>
        <end position="724"/>
    </location>
</feature>
<feature type="region of interest" description="MIF2 homology domain III" evidence="1">
    <location>
        <begin position="853"/>
        <end position="906"/>
    </location>
</feature>
<feature type="short sequence motif" description="Nuclear localization signal" evidence="3">
    <location>
        <begin position="228"/>
        <end position="242"/>
    </location>
</feature>
<feature type="short sequence motif" description="Nuclear localization signal" evidence="3">
    <location>
        <begin position="449"/>
        <end position="466"/>
    </location>
</feature>
<feature type="short sequence motif" description="Nuclear localization signal" evidence="3">
    <location>
        <begin position="525"/>
        <end position="540"/>
    </location>
</feature>
<feature type="short sequence motif" description="Nuclear localization signal" evidence="3">
    <location>
        <begin position="744"/>
        <end position="762"/>
    </location>
</feature>
<feature type="compositionally biased region" description="Polar residues" evidence="4">
    <location>
        <begin position="56"/>
        <end position="74"/>
    </location>
</feature>
<feature type="compositionally biased region" description="Polar residues" evidence="4">
    <location>
        <begin position="87"/>
        <end position="96"/>
    </location>
</feature>
<feature type="compositionally biased region" description="Low complexity" evidence="4">
    <location>
        <begin position="97"/>
        <end position="108"/>
    </location>
</feature>
<feature type="compositionally biased region" description="Polar residues" evidence="4">
    <location>
        <begin position="202"/>
        <end position="212"/>
    </location>
</feature>
<feature type="compositionally biased region" description="Polar residues" evidence="4">
    <location>
        <begin position="402"/>
        <end position="424"/>
    </location>
</feature>
<feature type="compositionally biased region" description="Basic and acidic residues" evidence="4">
    <location>
        <begin position="426"/>
        <end position="450"/>
    </location>
</feature>
<feature type="compositionally biased region" description="Low complexity" evidence="4">
    <location>
        <begin position="465"/>
        <end position="474"/>
    </location>
</feature>
<feature type="compositionally biased region" description="Polar residues" evidence="4">
    <location>
        <begin position="481"/>
        <end position="494"/>
    </location>
</feature>
<feature type="compositionally biased region" description="Basic and acidic residues" evidence="4">
    <location>
        <begin position="496"/>
        <end position="512"/>
    </location>
</feature>
<feature type="compositionally biased region" description="Basic residues" evidence="4">
    <location>
        <begin position="523"/>
        <end position="546"/>
    </location>
</feature>
<feature type="compositionally biased region" description="Polar residues" evidence="4">
    <location>
        <begin position="626"/>
        <end position="637"/>
    </location>
</feature>
<feature type="modified residue" description="Phosphoserine" evidence="2">
    <location>
        <position position="71"/>
    </location>
</feature>
<feature type="modified residue" description="Phosphoserine" evidence="2">
    <location>
        <position position="94"/>
    </location>
</feature>
<feature type="modified residue" description="Phosphoserine" evidence="2">
    <location>
        <position position="302"/>
    </location>
</feature>
<feature type="modified residue" description="Phosphoserine" evidence="7">
    <location>
        <position position="344"/>
    </location>
</feature>
<feature type="modified residue" description="Phosphoserine" evidence="7">
    <location>
        <position position="363"/>
    </location>
</feature>
<feature type="modified residue" description="Phosphoserine" evidence="2">
    <location>
        <position position="404"/>
    </location>
</feature>
<feature type="modified residue" description="Phosphoserine" evidence="2">
    <location>
        <position position="495"/>
    </location>
</feature>
<feature type="modified residue" description="Phosphoserine" evidence="2">
    <location>
        <position position="505"/>
    </location>
</feature>
<feature type="modified residue" description="Phosphoserine" evidence="2">
    <location>
        <position position="647"/>
    </location>
</feature>
<feature type="modified residue" description="Phosphoserine" evidence="2">
    <location>
        <position position="673"/>
    </location>
</feature>
<feature type="modified residue" description="Phosphoserine" evidence="2">
    <location>
        <position position="728"/>
    </location>
</feature>
<feature type="modified residue" description="Phosphoserine" evidence="2">
    <location>
        <position position="737"/>
    </location>
</feature>
<feature type="cross-link" description="Glycyl lysine isopeptide (Lys-Gly) (interchain with G-Cter in SUMO2)" evidence="2">
    <location>
        <position position="150"/>
    </location>
</feature>
<feature type="cross-link" description="Glycyl lysine isopeptide (Lys-Gly) (interchain with G-Cter in SUMO2)" evidence="2">
    <location>
        <position position="182"/>
    </location>
</feature>
<feature type="cross-link" description="Glycyl lysine isopeptide (Lys-Gly) (interchain with G-Cter in SUMO2)" evidence="2">
    <location>
        <position position="229"/>
    </location>
</feature>
<feature type="cross-link" description="Glycyl lysine isopeptide (Lys-Gly) (interchain with G-Cter in SUMO2)" evidence="2">
    <location>
        <position position="240"/>
    </location>
</feature>
<feature type="cross-link" description="Glycyl lysine isopeptide (Lys-Gly) (interchain with G-Cter in SUMO2)" evidence="2">
    <location>
        <position position="242"/>
    </location>
</feature>
<feature type="cross-link" description="Glycyl lysine isopeptide (Lys-Gly) (interchain with G-Cter in SUMO2)" evidence="2">
    <location>
        <position position="266"/>
    </location>
</feature>
<feature type="cross-link" description="Glycyl lysine isopeptide (Lys-Gly) (interchain with G-Cter in SUMO2)" evidence="2">
    <location>
        <position position="501"/>
    </location>
</feature>
<feature type="cross-link" description="Glycyl lysine isopeptide (Lys-Gly) (interchain with G-Cter in SUMO2)" evidence="2">
    <location>
        <position position="640"/>
    </location>
</feature>
<feature type="cross-link" description="Glycyl lysine isopeptide (Lys-Gly) (interchain with G-Cter in SUMO2)" evidence="2">
    <location>
        <position position="692"/>
    </location>
</feature>
<feature type="cross-link" description="Glycyl lysine isopeptide (Lys-Gly) (interchain with G-Cter in SUMO2)" evidence="2">
    <location>
        <position position="770"/>
    </location>
</feature>
<feature type="sequence conflict" description="In Ref. 1; AAC04314." evidence="6" ref="1">
    <original>S</original>
    <variation>M</variation>
    <location>
        <position position="3"/>
    </location>
</feature>
<feature type="sequence conflict" description="In Ref. 1; AAC04314." evidence="6" ref="1">
    <original>L</original>
    <variation>S</variation>
    <location>
        <position position="185"/>
    </location>
</feature>
<feature type="sequence conflict" description="In Ref. 1; AAC04314." evidence="6" ref="1">
    <original>K</original>
    <variation>T</variation>
    <location>
        <position position="418"/>
    </location>
</feature>
<feature type="sequence conflict" description="In Ref. 1; AAC04314." evidence="6" ref="1">
    <original>K</original>
    <variation>R</variation>
    <location>
        <position position="450"/>
    </location>
</feature>
<feature type="sequence conflict" description="In Ref. 1; AAC04314." evidence="6" ref="1">
    <original>C</original>
    <variation>R</variation>
    <location>
        <position position="488"/>
    </location>
</feature>
<dbReference type="EMBL" id="U03113">
    <property type="protein sequence ID" value="AAC04314.1"/>
    <property type="molecule type" value="mRNA"/>
</dbReference>
<dbReference type="EMBL" id="CH466524">
    <property type="protein sequence ID" value="EDL37951.1"/>
    <property type="molecule type" value="Genomic_DNA"/>
</dbReference>
<dbReference type="EMBL" id="BC150700">
    <property type="protein sequence ID" value="AAI50701.1"/>
    <property type="molecule type" value="mRNA"/>
</dbReference>
<dbReference type="CCDS" id="CCDS39123.1"/>
<dbReference type="PIR" id="A54654">
    <property type="entry name" value="A54654"/>
</dbReference>
<dbReference type="RefSeq" id="NP_001332831.1">
    <property type="nucleotide sequence ID" value="NM_001345902.1"/>
</dbReference>
<dbReference type="RefSeq" id="NP_001332832.1">
    <property type="nucleotide sequence ID" value="NM_001345903.1"/>
</dbReference>
<dbReference type="RefSeq" id="NP_001332833.1">
    <property type="nucleotide sequence ID" value="NM_001345904.1"/>
</dbReference>
<dbReference type="RefSeq" id="NP_031709.2">
    <property type="nucleotide sequence ID" value="NM_007683.4"/>
</dbReference>
<dbReference type="SMR" id="P49452"/>
<dbReference type="BioGRID" id="198676">
    <property type="interactions" value="1"/>
</dbReference>
<dbReference type="ComplexPortal" id="CPX-5704">
    <property type="entry name" value="Kinetochore CCAN complex"/>
</dbReference>
<dbReference type="FunCoup" id="P49452">
    <property type="interactions" value="2313"/>
</dbReference>
<dbReference type="IntAct" id="P49452">
    <property type="interactions" value="167"/>
</dbReference>
<dbReference type="MINT" id="P49452"/>
<dbReference type="STRING" id="10090.ENSMUSP00000031170"/>
<dbReference type="iPTMnet" id="P49452"/>
<dbReference type="PhosphoSitePlus" id="P49452"/>
<dbReference type="jPOST" id="P49452"/>
<dbReference type="PaxDb" id="10090-ENSMUSP00000031170"/>
<dbReference type="PeptideAtlas" id="P49452"/>
<dbReference type="ProteomicsDB" id="280059"/>
<dbReference type="Pumba" id="P49452"/>
<dbReference type="Antibodypedia" id="6105">
    <property type="antibodies" value="239 antibodies from 31 providers"/>
</dbReference>
<dbReference type="DNASU" id="12617"/>
<dbReference type="Ensembl" id="ENSMUST00000031170.10">
    <property type="protein sequence ID" value="ENSMUSP00000031170.9"/>
    <property type="gene ID" value="ENSMUSG00000029253.13"/>
</dbReference>
<dbReference type="GeneID" id="12617"/>
<dbReference type="KEGG" id="mmu:12617"/>
<dbReference type="UCSC" id="uc008xxc.2">
    <property type="organism name" value="mouse"/>
</dbReference>
<dbReference type="AGR" id="MGI:99700"/>
<dbReference type="CTD" id="12617"/>
<dbReference type="MGI" id="MGI:99700">
    <property type="gene designation" value="Cenpc1"/>
</dbReference>
<dbReference type="VEuPathDB" id="HostDB:ENSMUSG00000029253"/>
<dbReference type="eggNOG" id="ENOG502RYQH">
    <property type="taxonomic scope" value="Eukaryota"/>
</dbReference>
<dbReference type="GeneTree" id="ENSGT00390000016737"/>
<dbReference type="HOGENOM" id="CLU_013594_0_0_1"/>
<dbReference type="InParanoid" id="P49452"/>
<dbReference type="OMA" id="DHHNEAD"/>
<dbReference type="OrthoDB" id="1939643at2759"/>
<dbReference type="PhylomeDB" id="P49452"/>
<dbReference type="TreeFam" id="TF101132"/>
<dbReference type="Reactome" id="R-MMU-141444">
    <property type="pathway name" value="Amplification of signal from unattached kinetochores via a MAD2 inhibitory signal"/>
</dbReference>
<dbReference type="Reactome" id="R-MMU-2467813">
    <property type="pathway name" value="Separation of Sister Chromatids"/>
</dbReference>
<dbReference type="Reactome" id="R-MMU-2500257">
    <property type="pathway name" value="Resolution of Sister Chromatid Cohesion"/>
</dbReference>
<dbReference type="Reactome" id="R-MMU-5663220">
    <property type="pathway name" value="RHO GTPases Activate Formins"/>
</dbReference>
<dbReference type="Reactome" id="R-MMU-606279">
    <property type="pathway name" value="Deposition of new CENPA-containing nucleosomes at the centromere"/>
</dbReference>
<dbReference type="Reactome" id="R-MMU-68877">
    <property type="pathway name" value="Mitotic Prometaphase"/>
</dbReference>
<dbReference type="Reactome" id="R-MMU-9648025">
    <property type="pathway name" value="EML4 and NUDC in mitotic spindle formation"/>
</dbReference>
<dbReference type="BioGRID-ORCS" id="12617">
    <property type="hits" value="18 hits in 116 CRISPR screens"/>
</dbReference>
<dbReference type="PRO" id="PR:P49452"/>
<dbReference type="Proteomes" id="UP000000589">
    <property type="component" value="Chromosome 5"/>
</dbReference>
<dbReference type="RNAct" id="P49452">
    <property type="molecule type" value="protein"/>
</dbReference>
<dbReference type="Bgee" id="ENSMUSG00000029253">
    <property type="expression patterns" value="Expressed in pharyngeal arch 2 and 253 other cell types or tissues"/>
</dbReference>
<dbReference type="GO" id="GO:0000779">
    <property type="term" value="C:condensed chromosome, centromeric region"/>
    <property type="evidence" value="ECO:0000314"/>
    <property type="project" value="MGI"/>
</dbReference>
<dbReference type="GO" id="GO:0000939">
    <property type="term" value="C:inner kinetochore"/>
    <property type="evidence" value="ECO:0000266"/>
    <property type="project" value="ComplexPortal"/>
</dbReference>
<dbReference type="GO" id="GO:0000776">
    <property type="term" value="C:kinetochore"/>
    <property type="evidence" value="ECO:0000250"/>
    <property type="project" value="UniProtKB"/>
</dbReference>
<dbReference type="GO" id="GO:0030496">
    <property type="term" value="C:midbody"/>
    <property type="evidence" value="ECO:0007669"/>
    <property type="project" value="Ensembl"/>
</dbReference>
<dbReference type="GO" id="GO:0016604">
    <property type="term" value="C:nuclear body"/>
    <property type="evidence" value="ECO:0007669"/>
    <property type="project" value="Ensembl"/>
</dbReference>
<dbReference type="GO" id="GO:0005634">
    <property type="term" value="C:nucleus"/>
    <property type="evidence" value="ECO:0000303"/>
    <property type="project" value="ComplexPortal"/>
</dbReference>
<dbReference type="GO" id="GO:0005721">
    <property type="term" value="C:pericentric heterochromatin"/>
    <property type="evidence" value="ECO:0000314"/>
    <property type="project" value="MGI"/>
</dbReference>
<dbReference type="GO" id="GO:0019237">
    <property type="term" value="F:centromeric DNA binding"/>
    <property type="evidence" value="ECO:0007669"/>
    <property type="project" value="InterPro"/>
</dbReference>
<dbReference type="GO" id="GO:0042802">
    <property type="term" value="F:identical protein binding"/>
    <property type="evidence" value="ECO:0007669"/>
    <property type="project" value="Ensembl"/>
</dbReference>
<dbReference type="GO" id="GO:0051301">
    <property type="term" value="P:cell division"/>
    <property type="evidence" value="ECO:0007669"/>
    <property type="project" value="UniProtKB-KW"/>
</dbReference>
<dbReference type="GO" id="GO:0007059">
    <property type="term" value="P:chromosome segregation"/>
    <property type="evidence" value="ECO:0000250"/>
    <property type="project" value="UniProtKB"/>
</dbReference>
<dbReference type="GO" id="GO:0051382">
    <property type="term" value="P:kinetochore assembly"/>
    <property type="evidence" value="ECO:0000250"/>
    <property type="project" value="UniProtKB"/>
</dbReference>
<dbReference type="GO" id="GO:0000278">
    <property type="term" value="P:mitotic cell cycle"/>
    <property type="evidence" value="ECO:0000250"/>
    <property type="project" value="UniProtKB"/>
</dbReference>
<dbReference type="FunFam" id="2.60.120.10:FF:000033">
    <property type="entry name" value="Centromere protein C 1"/>
    <property type="match status" value="1"/>
</dbReference>
<dbReference type="Gene3D" id="2.60.120.10">
    <property type="entry name" value="Jelly Rolls"/>
    <property type="match status" value="1"/>
</dbReference>
<dbReference type="InterPro" id="IPR028386">
    <property type="entry name" value="CENP-C/Mif2/cnp3"/>
</dbReference>
<dbReference type="InterPro" id="IPR028931">
    <property type="entry name" value="CENP-C_mid"/>
</dbReference>
<dbReference type="InterPro" id="IPR028052">
    <property type="entry name" value="CENP-C_N_dom"/>
</dbReference>
<dbReference type="InterPro" id="IPR025974">
    <property type="entry name" value="Mif2/CENP-C_cupin"/>
</dbReference>
<dbReference type="InterPro" id="IPR014710">
    <property type="entry name" value="RmlC-like_jellyroll"/>
</dbReference>
<dbReference type="InterPro" id="IPR011051">
    <property type="entry name" value="RmlC_Cupin_sf"/>
</dbReference>
<dbReference type="PANTHER" id="PTHR16684">
    <property type="entry name" value="CENTROMERE PROTEIN C"/>
    <property type="match status" value="1"/>
</dbReference>
<dbReference type="PANTHER" id="PTHR16684:SF11">
    <property type="entry name" value="CENTROMERE PROTEIN C"/>
    <property type="match status" value="1"/>
</dbReference>
<dbReference type="Pfam" id="PF11699">
    <property type="entry name" value="CENP-C_C"/>
    <property type="match status" value="1"/>
</dbReference>
<dbReference type="Pfam" id="PF15620">
    <property type="entry name" value="CENP-C_mid"/>
    <property type="match status" value="1"/>
</dbReference>
<dbReference type="Pfam" id="PF15622">
    <property type="entry name" value="CENP_C_N"/>
    <property type="match status" value="2"/>
</dbReference>
<dbReference type="SUPFAM" id="SSF51182">
    <property type="entry name" value="RmlC-like cupins"/>
    <property type="match status" value="1"/>
</dbReference>
<keyword id="KW-0131">Cell cycle</keyword>
<keyword id="KW-0132">Cell division</keyword>
<keyword id="KW-0137">Centromere</keyword>
<keyword id="KW-0158">Chromosome</keyword>
<keyword id="KW-0238">DNA-binding</keyword>
<keyword id="KW-1017">Isopeptide bond</keyword>
<keyword id="KW-0995">Kinetochore</keyword>
<keyword id="KW-0498">Mitosis</keyword>
<keyword id="KW-0539">Nucleus</keyword>
<keyword id="KW-0597">Phosphoprotein</keyword>
<keyword id="KW-1185">Reference proteome</keyword>
<keyword id="KW-0832">Ubl conjugation</keyword>
<reference key="1">
    <citation type="journal article" date="1994" name="Genomics">
        <title>Sequence homologies and linkage group conservation of the human and mouse Cenpc genes.</title>
        <authorList>
            <person name="McKay S."/>
            <person name="Thomson E."/>
            <person name="Cooke H."/>
        </authorList>
    </citation>
    <scope>NUCLEOTIDE SEQUENCE [MRNA]</scope>
    <source>
        <strain>SWR/J</strain>
    </source>
</reference>
<reference key="2">
    <citation type="submission" date="2005-07" db="EMBL/GenBank/DDBJ databases">
        <authorList>
            <person name="Mural R.J."/>
            <person name="Adams M.D."/>
            <person name="Myers E.W."/>
            <person name="Smith H.O."/>
            <person name="Venter J.C."/>
        </authorList>
    </citation>
    <scope>NUCLEOTIDE SEQUENCE [LARGE SCALE GENOMIC DNA]</scope>
</reference>
<reference key="3">
    <citation type="journal article" date="2004" name="Genome Res.">
        <title>The status, quality, and expansion of the NIH full-length cDNA project: the Mammalian Gene Collection (MGC).</title>
        <authorList>
            <consortium name="The MGC Project Team"/>
        </authorList>
    </citation>
    <scope>NUCLEOTIDE SEQUENCE [LARGE SCALE MRNA]</scope>
    <source>
        <tissue>Brain</tissue>
    </source>
</reference>
<reference key="4">
    <citation type="journal article" date="2010" name="Cell">
        <title>A tissue-specific atlas of mouse protein phosphorylation and expression.</title>
        <authorList>
            <person name="Huttlin E.L."/>
            <person name="Jedrychowski M.P."/>
            <person name="Elias J.E."/>
            <person name="Goswami T."/>
            <person name="Rad R."/>
            <person name="Beausoleil S.A."/>
            <person name="Villen J."/>
            <person name="Haas W."/>
            <person name="Sowa M.E."/>
            <person name="Gygi S.P."/>
        </authorList>
    </citation>
    <scope>PHOSPHORYLATION [LARGE SCALE ANALYSIS] AT SER-344 AND SER-363</scope>
    <scope>IDENTIFICATION BY MASS SPECTROMETRY [LARGE SCALE ANALYSIS]</scope>
    <source>
        <tissue>Spleen</tissue>
    </source>
</reference>
<reference key="5">
    <citation type="journal article" date="2015" name="Nature">
        <title>Meikin is a conserved regulator of meiosis-I-specific kinetochore function.</title>
        <authorList>
            <person name="Kim J."/>
            <person name="Ishiguro K."/>
            <person name="Nambu A."/>
            <person name="Akiyoshi B."/>
            <person name="Yokobayashi S."/>
            <person name="Kagami A."/>
            <person name="Ishiguro T."/>
            <person name="Pendas A.M."/>
            <person name="Takeda N."/>
            <person name="Sakakibara Y."/>
            <person name="Kitajima T.S."/>
            <person name="Tanno Y."/>
            <person name="Sakuno T."/>
            <person name="Watanabe Y."/>
        </authorList>
    </citation>
    <scope>INTERACTION WITH MEIKIN</scope>
</reference>
<comment type="function">
    <text evidence="2">Component of the CENPA-NAC (nucleosome-associated) complex, a complex that plays a central role in assembly of kinetochore proteins, mitotic progression and chromosome segregation. The CENPA-NAC complex recruits the CENPA-CAD (nucleosome distal) complex and may be involved in incorporation of newly synthesized CENPA into centromeres. CENPC recruits DNA methylation and DNMT3B to both centromeric and pericentromeric satellite repeats and regulates the histone code in these regions.</text>
</comment>
<comment type="subunit">
    <text evidence="2 5">Oligomer. Component of the CENPA-NAC complex, at least composed of CENPA, CENPC, CENPH, CENPM, CENPN, CENPT and CENPU. The CENPA-NAC complex interacts with the CENPA-CAD complex, composed of CENPI, CENPK, CENPL, CENPO, CENPP, CENPQ, CENPR and CENPS. Binds to DAXX. Interacts with DNMT3B. Interacts directly with CENPA. Identified in a centromere complex containing histones H2A, H2B and H4, and at least CENPA, CENPB, CENPC, CENPT, CENPN, HJURP, SUPT16H, SSRP1 and RSF1 (By similarity). Interacts with MEIKIN (PubMed:25533956).</text>
</comment>
<comment type="interaction">
    <interactant intactId="EBI-1186252">
        <id>P49452</id>
    </interactant>
    <interactant intactId="EBI-20739301">
        <id>Q5F2C3</id>
        <label>Meikin</label>
    </interactant>
    <organismsDiffer>false</organismsDiffer>
    <experiments>5</experiments>
</comment>
<comment type="interaction">
    <interactant intactId="EBI-1186252">
        <id>P49452</id>
    </interactant>
    <interactant intactId="EBI-1186266">
        <id>O08586</id>
        <label>Pten</label>
    </interactant>
    <organismsDiffer>false</organismsDiffer>
    <experiments>2</experiments>
</comment>
<comment type="subcellular location">
    <subcellularLocation>
        <location evidence="2">Nucleus</location>
    </subcellularLocation>
    <subcellularLocation>
        <location evidence="2">Chromosome</location>
        <location evidence="2">Centromere</location>
        <location evidence="2">Kinetochore</location>
    </subcellularLocation>
    <subcellularLocation>
        <location evidence="2">Chromosome</location>
        <location evidence="2">Centromere</location>
    </subcellularLocation>
    <text evidence="2">Localizes exclusively in the kinetochore domain of centromeres.</text>
</comment>
<comment type="domain">
    <text evidence="2">The MIF2 homology domain II targets centromeres and binds the alpha satellite DNA in vivo. The MIF2 homology domain III can induce CENPC dimerization/oligomerization.</text>
</comment>
<comment type="similarity">
    <text evidence="6">Belongs to the CENP-C/MIF2 family.</text>
</comment>
<evidence type="ECO:0000250" key="1"/>
<evidence type="ECO:0000250" key="2">
    <source>
        <dbReference type="UniProtKB" id="Q03188"/>
    </source>
</evidence>
<evidence type="ECO:0000255" key="3"/>
<evidence type="ECO:0000256" key="4">
    <source>
        <dbReference type="SAM" id="MobiDB-lite"/>
    </source>
</evidence>
<evidence type="ECO:0000269" key="5">
    <source>
    </source>
</evidence>
<evidence type="ECO:0000305" key="6"/>
<evidence type="ECO:0007744" key="7">
    <source>
    </source>
</evidence>
<organism>
    <name type="scientific">Mus musculus</name>
    <name type="common">Mouse</name>
    <dbReference type="NCBI Taxonomy" id="10090"/>
    <lineage>
        <taxon>Eukaryota</taxon>
        <taxon>Metazoa</taxon>
        <taxon>Chordata</taxon>
        <taxon>Craniata</taxon>
        <taxon>Vertebrata</taxon>
        <taxon>Euteleostomi</taxon>
        <taxon>Mammalia</taxon>
        <taxon>Eutheria</taxon>
        <taxon>Euarchontoglires</taxon>
        <taxon>Glires</taxon>
        <taxon>Rodentia</taxon>
        <taxon>Myomorpha</taxon>
        <taxon>Muroidea</taxon>
        <taxon>Muridae</taxon>
        <taxon>Murinae</taxon>
        <taxon>Mus</taxon>
        <taxon>Mus</taxon>
    </lineage>
</organism>
<sequence>MASFHLDHLKNYHRRYCRSSRAPNIHTKKGQNMLEILQDCFEDQSKASFLDDFTESLTSSTQKKKANYSQSSSKKCPESHSKPVPVSSRTGEASLQASAEPSEAAGGSVQANEVHHGASDELDLCVGSPVVLLDANVNTLQKAASPAGQKRVASVSRSPVDRQASNKNISFKTRKRLNFEDKVTLSTAETENSVLQVEDNLSKGQEGTSSEITQKRDDLSSDVQSRSKKNFSELFLETVKRKSKSSSVVRHTAAVPFSPPPPSDMKLLEDEFIIDRSDRSFSSRLWVMIPSKDRHLSAHKPSPENTALLQGKKSREKSHSLSAMTFARNTQSDKAHPIEEAQLSVEENPATTCTDELENDCRSPENKMQSETAKTPPAWERTTKQSQRRVSKPKAAEELRKGQSSWENSNVSNTGQDKLQINSKRNMKDCEEVRNEPNPKKQKPALENKKKTNSTQTNKEKSGKKFFSGGSKNKFVPKKVTLTSRRSCRISQRPSEWWRVKSDESSVDRNPSKENNSPVVYPNKKKQTKRNHVSKRAGKKPGSSKRQKTEMSPRVQKSLNVKDSGGTVSGHDDTSRSQRKPLKIIEADPTQKSLAISRPKRGCKYRNNVMTSPNVHLKSHTEEYTSKTQMESASNSEMSKRSVWEESGPSRFKNYEMPGSSNSEMGDEQDQKSLHFTTRSFNMVPDKKLHHKLVLPSNSPNVRRSNRIRLKPLEYWRGERVDYQESSSGQLVLEIISPSSVPTKIKAQRNLGKVNKKVTKKPTHLNSHEKAKMELPLDMRLGDPFQATLAKDPETAELVPMDLIRPRDTYRFFVEQHGLKVFKTLDTIYFSTGKLVLGPYEEKGKQHVGQDILVFYVNFGDLLCTLHETPYKLTTGDSFYVPSGNHYNIKNLLNVESSLLFTQIKR</sequence>
<accession>P49452</accession>
<accession>B9EK81</accession>
<gene>
    <name type="primary">Cenpc</name>
    <name type="synonym">Cenpc1</name>
</gene>
<proteinExistence type="evidence at protein level"/>
<name>CENPC_MOUSE</name>